<dbReference type="EMBL" id="AB033040">
    <property type="protein sequence ID" value="BAA86528.1"/>
    <property type="status" value="ALT_INIT"/>
    <property type="molecule type" value="mRNA"/>
</dbReference>
<dbReference type="EMBL" id="AK130520">
    <property type="protein sequence ID" value="BAC85369.1"/>
    <property type="molecule type" value="mRNA"/>
</dbReference>
<dbReference type="EMBL" id="AC093905">
    <property type="status" value="NOT_ANNOTATED_CDS"/>
    <property type="molecule type" value="Genomic_DNA"/>
</dbReference>
<dbReference type="EMBL" id="AC096733">
    <property type="status" value="NOT_ANNOTATED_CDS"/>
    <property type="molecule type" value="Genomic_DNA"/>
</dbReference>
<dbReference type="EMBL" id="AC097475">
    <property type="status" value="NOT_ANNOTATED_CDS"/>
    <property type="molecule type" value="Genomic_DNA"/>
</dbReference>
<dbReference type="EMBL" id="BC101992">
    <property type="protein sequence ID" value="AAI01993.1"/>
    <property type="molecule type" value="mRNA"/>
</dbReference>
<dbReference type="CCDS" id="CCDS34065.1">
    <molecule id="Q9ULK6-1"/>
</dbReference>
<dbReference type="RefSeq" id="NP_065775.1">
    <molecule id="Q9ULK6-1"/>
    <property type="nucleotide sequence ID" value="NM_020724.2"/>
</dbReference>
<dbReference type="RefSeq" id="XP_011530450.1">
    <molecule id="Q9ULK6-4"/>
    <property type="nucleotide sequence ID" value="XM_011532148.4"/>
</dbReference>
<dbReference type="RefSeq" id="XP_054206543.1">
    <molecule id="Q9ULK6-4"/>
    <property type="nucleotide sequence ID" value="XM_054350568.1"/>
</dbReference>
<dbReference type="SMR" id="Q9ULK6"/>
<dbReference type="BioGRID" id="121553">
    <property type="interactions" value="19"/>
</dbReference>
<dbReference type="FunCoup" id="Q9ULK6">
    <property type="interactions" value="823"/>
</dbReference>
<dbReference type="IntAct" id="Q9ULK6">
    <property type="interactions" value="18"/>
</dbReference>
<dbReference type="STRING" id="9606.ENSP00000425840"/>
<dbReference type="GlyCosmos" id="Q9ULK6">
    <property type="glycosylation" value="4 sites, No reported glycans"/>
</dbReference>
<dbReference type="GlyGen" id="Q9ULK6">
    <property type="glycosylation" value="4 sites"/>
</dbReference>
<dbReference type="iPTMnet" id="Q9ULK6"/>
<dbReference type="PhosphoSitePlus" id="Q9ULK6"/>
<dbReference type="BioMuta" id="RNF150"/>
<dbReference type="DMDM" id="134035025"/>
<dbReference type="jPOST" id="Q9ULK6"/>
<dbReference type="MassIVE" id="Q9ULK6"/>
<dbReference type="PaxDb" id="9606-ENSP00000425840"/>
<dbReference type="PeptideAtlas" id="Q9ULK6"/>
<dbReference type="ProteomicsDB" id="85063">
    <molecule id="Q9ULK6-1"/>
</dbReference>
<dbReference type="ProteomicsDB" id="85064">
    <molecule id="Q9ULK6-2"/>
</dbReference>
<dbReference type="ProteomicsDB" id="85065">
    <molecule id="Q9ULK6-3"/>
</dbReference>
<dbReference type="ProteomicsDB" id="85066">
    <molecule id="Q9ULK6-4"/>
</dbReference>
<dbReference type="Antibodypedia" id="27282">
    <property type="antibodies" value="149 antibodies from 21 providers"/>
</dbReference>
<dbReference type="DNASU" id="57484"/>
<dbReference type="Ensembl" id="ENST00000306799.7">
    <molecule id="Q9ULK6-2"/>
    <property type="protein sequence ID" value="ENSP00000304321.3"/>
    <property type="gene ID" value="ENSG00000170153.11"/>
</dbReference>
<dbReference type="Ensembl" id="ENST00000420921.6">
    <molecule id="Q9ULK6-4"/>
    <property type="protein sequence ID" value="ENSP00000394581.2"/>
    <property type="gene ID" value="ENSG00000170153.11"/>
</dbReference>
<dbReference type="Ensembl" id="ENST00000507500.5">
    <molecule id="Q9ULK6-3"/>
    <property type="protein sequence ID" value="ENSP00000425568.1"/>
    <property type="gene ID" value="ENSG00000170153.11"/>
</dbReference>
<dbReference type="Ensembl" id="ENST00000515673.7">
    <molecule id="Q9ULK6-1"/>
    <property type="protein sequence ID" value="ENSP00000425840.1"/>
    <property type="gene ID" value="ENSG00000170153.11"/>
</dbReference>
<dbReference type="GeneID" id="57484"/>
<dbReference type="KEGG" id="hsa:57484"/>
<dbReference type="MANE-Select" id="ENST00000515673.7">
    <property type="protein sequence ID" value="ENSP00000425840.1"/>
    <property type="RefSeq nucleotide sequence ID" value="NM_020724.2"/>
    <property type="RefSeq protein sequence ID" value="NP_065775.1"/>
</dbReference>
<dbReference type="UCSC" id="uc003iio.2">
    <molecule id="Q9ULK6-1"/>
    <property type="organism name" value="human"/>
</dbReference>
<dbReference type="AGR" id="HGNC:23138"/>
<dbReference type="CTD" id="57484"/>
<dbReference type="DisGeNET" id="57484"/>
<dbReference type="GeneCards" id="RNF150"/>
<dbReference type="HGNC" id="HGNC:23138">
    <property type="gene designation" value="RNF150"/>
</dbReference>
<dbReference type="HPA" id="ENSG00000170153">
    <property type="expression patterns" value="Low tissue specificity"/>
</dbReference>
<dbReference type="neXtProt" id="NX_Q9ULK6"/>
<dbReference type="OpenTargets" id="ENSG00000170153"/>
<dbReference type="PharmGKB" id="PA134918555"/>
<dbReference type="VEuPathDB" id="HostDB:ENSG00000170153"/>
<dbReference type="eggNOG" id="KOG0800">
    <property type="taxonomic scope" value="Eukaryota"/>
</dbReference>
<dbReference type="GeneTree" id="ENSGT00940000156171"/>
<dbReference type="HOGENOM" id="CLU_049885_2_1_1"/>
<dbReference type="InParanoid" id="Q9ULK6"/>
<dbReference type="OMA" id="MCKINIL"/>
<dbReference type="OrthoDB" id="5357315at2759"/>
<dbReference type="PAN-GO" id="Q9ULK6">
    <property type="GO annotations" value="3 GO annotations based on evolutionary models"/>
</dbReference>
<dbReference type="PhylomeDB" id="Q9ULK6"/>
<dbReference type="TreeFam" id="TF317486"/>
<dbReference type="PathwayCommons" id="Q9ULK6"/>
<dbReference type="SignaLink" id="Q9ULK6"/>
<dbReference type="SIGNOR" id="Q9ULK6"/>
<dbReference type="BioGRID-ORCS" id="57484">
    <property type="hits" value="12 hits in 1186 CRISPR screens"/>
</dbReference>
<dbReference type="ChiTaRS" id="RNF150">
    <property type="organism name" value="human"/>
</dbReference>
<dbReference type="GenomeRNAi" id="57484"/>
<dbReference type="Pharos" id="Q9ULK6">
    <property type="development level" value="Tdark"/>
</dbReference>
<dbReference type="PRO" id="PR:Q9ULK6"/>
<dbReference type="Proteomes" id="UP000005640">
    <property type="component" value="Chromosome 4"/>
</dbReference>
<dbReference type="RNAct" id="Q9ULK6">
    <property type="molecule type" value="protein"/>
</dbReference>
<dbReference type="Bgee" id="ENSG00000170153">
    <property type="expression patterns" value="Expressed in left ventricle myocardium and 181 other cell types or tissues"/>
</dbReference>
<dbReference type="ExpressionAtlas" id="Q9ULK6">
    <property type="expression patterns" value="baseline and differential"/>
</dbReference>
<dbReference type="GO" id="GO:0005737">
    <property type="term" value="C:cytoplasm"/>
    <property type="evidence" value="ECO:0000318"/>
    <property type="project" value="GO_Central"/>
</dbReference>
<dbReference type="GO" id="GO:0016020">
    <property type="term" value="C:membrane"/>
    <property type="evidence" value="ECO:0007669"/>
    <property type="project" value="UniProtKB-SubCell"/>
</dbReference>
<dbReference type="GO" id="GO:0061630">
    <property type="term" value="F:ubiquitin protein ligase activity"/>
    <property type="evidence" value="ECO:0000318"/>
    <property type="project" value="GO_Central"/>
</dbReference>
<dbReference type="GO" id="GO:0008270">
    <property type="term" value="F:zinc ion binding"/>
    <property type="evidence" value="ECO:0007669"/>
    <property type="project" value="UniProtKB-KW"/>
</dbReference>
<dbReference type="GO" id="GO:0006511">
    <property type="term" value="P:ubiquitin-dependent protein catabolic process"/>
    <property type="evidence" value="ECO:0000318"/>
    <property type="project" value="GO_Central"/>
</dbReference>
<dbReference type="CDD" id="cd02122">
    <property type="entry name" value="PA_GRAIL_like"/>
    <property type="match status" value="1"/>
</dbReference>
<dbReference type="CDD" id="cd16805">
    <property type="entry name" value="RING-H2_RNF150"/>
    <property type="match status" value="1"/>
</dbReference>
<dbReference type="FunFam" id="3.30.40.10:FF:000009">
    <property type="entry name" value="E3 ubiquitin-protein ligase RNF130"/>
    <property type="match status" value="1"/>
</dbReference>
<dbReference type="FunFam" id="3.50.30.30:FF:000016">
    <property type="entry name" value="Ring finger protein 150"/>
    <property type="match status" value="1"/>
</dbReference>
<dbReference type="Gene3D" id="3.50.30.30">
    <property type="match status" value="1"/>
</dbReference>
<dbReference type="Gene3D" id="3.30.40.10">
    <property type="entry name" value="Zinc/RING finger domain, C3HC4 (zinc finger)"/>
    <property type="match status" value="1"/>
</dbReference>
<dbReference type="InterPro" id="IPR046450">
    <property type="entry name" value="PA_dom_sf"/>
</dbReference>
<dbReference type="InterPro" id="IPR003137">
    <property type="entry name" value="PA_domain"/>
</dbReference>
<dbReference type="InterPro" id="IPR001841">
    <property type="entry name" value="Znf_RING"/>
</dbReference>
<dbReference type="InterPro" id="IPR013083">
    <property type="entry name" value="Znf_RING/FYVE/PHD"/>
</dbReference>
<dbReference type="PANTHER" id="PTHR46539">
    <property type="entry name" value="E3 UBIQUITIN-PROTEIN LIGASE ATL42"/>
    <property type="match status" value="1"/>
</dbReference>
<dbReference type="PANTHER" id="PTHR46539:SF27">
    <property type="entry name" value="RING FINGER PROTEIN 128"/>
    <property type="match status" value="1"/>
</dbReference>
<dbReference type="Pfam" id="PF02225">
    <property type="entry name" value="PA"/>
    <property type="match status" value="1"/>
</dbReference>
<dbReference type="Pfam" id="PF13639">
    <property type="entry name" value="zf-RING_2"/>
    <property type="match status" value="1"/>
</dbReference>
<dbReference type="SMART" id="SM00184">
    <property type="entry name" value="RING"/>
    <property type="match status" value="1"/>
</dbReference>
<dbReference type="SUPFAM" id="SSF52025">
    <property type="entry name" value="PA domain"/>
    <property type="match status" value="1"/>
</dbReference>
<dbReference type="SUPFAM" id="SSF57850">
    <property type="entry name" value="RING/U-box"/>
    <property type="match status" value="1"/>
</dbReference>
<dbReference type="PROSITE" id="PS50089">
    <property type="entry name" value="ZF_RING_2"/>
    <property type="match status" value="1"/>
</dbReference>
<proteinExistence type="evidence at protein level"/>
<comment type="interaction">
    <interactant intactId="EBI-36513929">
        <id>Q9ULK6-3</id>
    </interactant>
    <interactant intactId="EBI-399080">
        <id>Q92993</id>
        <label>KAT5</label>
    </interactant>
    <organismsDiffer>false</organismsDiffer>
    <experiments>3</experiments>
</comment>
<comment type="interaction">
    <interactant intactId="EBI-36513929">
        <id>Q9ULK6-3</id>
    </interactant>
    <interactant intactId="EBI-11742507">
        <id>Q8TAP4-4</id>
        <label>LMO3</label>
    </interactant>
    <organismsDiffer>false</organismsDiffer>
    <experiments>3</experiments>
</comment>
<comment type="interaction">
    <interactant intactId="EBI-36513929">
        <id>Q9ULK6-3</id>
    </interactant>
    <interactant intactId="EBI-1383528">
        <id>P17252</id>
        <label>PRKCA</label>
    </interactant>
    <organismsDiffer>false</organismsDiffer>
    <experiments>3</experiments>
</comment>
<comment type="interaction">
    <interactant intactId="EBI-36513929">
        <id>Q9ULK6-3</id>
    </interactant>
    <interactant intactId="EBI-9090795">
        <id>Q15047-2</id>
        <label>SETDB1</label>
    </interactant>
    <organismsDiffer>false</organismsDiffer>
    <experiments>3</experiments>
</comment>
<comment type="interaction">
    <interactant intactId="EBI-36513929">
        <id>Q9ULK6-3</id>
    </interactant>
    <interactant intactId="EBI-10243654">
        <id>Q5BVD1</id>
        <label>TTMP</label>
    </interactant>
    <organismsDiffer>false</organismsDiffer>
    <experiments>3</experiments>
</comment>
<comment type="interaction">
    <interactant intactId="EBI-36513929">
        <id>Q9ULK6-3</id>
    </interactant>
    <interactant intactId="EBI-359832">
        <id>P61981</id>
        <label>YWHAG</label>
    </interactant>
    <organismsDiffer>false</organismsDiffer>
    <experiments>3</experiments>
</comment>
<comment type="subcellular location">
    <subcellularLocation>
        <location evidence="6">Membrane</location>
        <topology evidence="6">Single-pass type I membrane protein</topology>
    </subcellularLocation>
</comment>
<comment type="alternative products">
    <event type="alternative splicing"/>
    <isoform>
        <id>Q9ULK6-1</id>
        <name>1</name>
        <sequence type="displayed"/>
    </isoform>
    <isoform>
        <id>Q9ULK6-2</id>
        <name>2</name>
        <sequence type="described" ref="VSP_023845"/>
    </isoform>
    <isoform>
        <id>Q9ULK6-3</id>
        <name>3</name>
        <sequence type="described" ref="VSP_023846 VSP_023847"/>
    </isoform>
    <isoform>
        <id>Q9ULK6-4</id>
        <name>4</name>
        <sequence type="described" ref="VSP_023843 VSP_023844"/>
    </isoform>
</comment>
<comment type="sequence caution" evidence="6">
    <conflict type="erroneous initiation">
        <sequence resource="EMBL-CDS" id="BAA86528"/>
    </conflict>
</comment>
<accession>Q9ULK6</accession>
<accession>Q3T1D0</accession>
<accession>Q6ZNW6</accession>
<gene>
    <name type="primary">RNF150</name>
    <name type="synonym">KIAA1214</name>
</gene>
<feature type="signal peptide" evidence="1">
    <location>
        <begin position="1"/>
        <end position="34"/>
    </location>
</feature>
<feature type="chain" id="PRO_0000280697" description="RING finger protein 150">
    <location>
        <begin position="35"/>
        <end position="438"/>
    </location>
</feature>
<feature type="topological domain" description="Extracellular" evidence="1">
    <location>
        <begin position="35"/>
        <end position="208"/>
    </location>
</feature>
<feature type="transmembrane region" description="Helical" evidence="1">
    <location>
        <begin position="209"/>
        <end position="229"/>
    </location>
</feature>
<feature type="topological domain" description="Cytoplasmic" evidence="1">
    <location>
        <begin position="230"/>
        <end position="438"/>
    </location>
</feature>
<feature type="domain" description="PA">
    <location>
        <begin position="81"/>
        <end position="183"/>
    </location>
</feature>
<feature type="zinc finger region" description="RING-type; atypical" evidence="2">
    <location>
        <begin position="278"/>
        <end position="319"/>
    </location>
</feature>
<feature type="glycosylation site" description="N-linked (GlcNAc...) asparagine" evidence="1">
    <location>
        <position position="45"/>
    </location>
</feature>
<feature type="glycosylation site" description="N-linked (GlcNAc...) asparagine" evidence="1">
    <location>
        <position position="125"/>
    </location>
</feature>
<feature type="glycosylation site" description="N-linked (GlcNAc...) asparagine" evidence="1">
    <location>
        <position position="153"/>
    </location>
</feature>
<feature type="glycosylation site" description="N-linked (GlcNAc...) asparagine" evidence="1">
    <location>
        <position position="186"/>
    </location>
</feature>
<feature type="splice variant" id="VSP_023843" description="In isoform 4." evidence="4">
    <location>
        <begin position="1"/>
        <end position="141"/>
    </location>
</feature>
<feature type="splice variant" id="VSP_023844" description="In isoform 4." evidence="4">
    <original>AVVIFNVGSNTNETITMPHA</original>
    <variation>MSSHAQPLKLISPCPYSLSS</variation>
    <location>
        <begin position="142"/>
        <end position="161"/>
    </location>
</feature>
<feature type="splice variant" id="VSP_023845" description="In isoform 2." evidence="3">
    <location>
        <begin position="204"/>
        <end position="245"/>
    </location>
</feature>
<feature type="splice variant" id="VSP_023846" description="In isoform 3." evidence="5">
    <original>QEPA</original>
    <variation>FCHT</variation>
    <location>
        <begin position="402"/>
        <end position="405"/>
    </location>
</feature>
<feature type="splice variant" id="VSP_023847" description="In isoform 3." evidence="5">
    <location>
        <begin position="406"/>
        <end position="438"/>
    </location>
</feature>
<sequence length="438" mass="48072">MAMSLIQACCSLALSTWLLSFCFVHLLCLDFTVAEKEEWYTAFVNITYAEPAPDPGAGAAGGGGAELHTEKTECGRYGEHSPKQDARGEVVMASSAHDRLACDPNTKFAAPTRGKNWIALIPKGNCTYRDKIRNAFLQNASAVVIFNVGSNTNETITMPHAGVEDIVAIMIPEPKGKEIVSLLERNITVTMYITIGTRNLQKYVSRTSVVFVSISFIVLMIISLAWLVFYYIQRFRYANARDRNQRRLGDAAKKAISKLQIRTIKKGDKETESDFDNCAVCIEGYKPNDVVRILPCRHLFHKSCVDPWLLDHRTCPMCKMNILKALGIPPNADCMDDLPTDFEGSLGGPPTNQITGASDTTVNESSVTLDPAVRTVGALQVVQDTDPIPQEGDVIFTTNSEQEPAVSSDSDISLIMAMEVGLSDVELSTDQDCEEVKS</sequence>
<keyword id="KW-0025">Alternative splicing</keyword>
<keyword id="KW-0325">Glycoprotein</keyword>
<keyword id="KW-0472">Membrane</keyword>
<keyword id="KW-0479">Metal-binding</keyword>
<keyword id="KW-1267">Proteomics identification</keyword>
<keyword id="KW-1185">Reference proteome</keyword>
<keyword id="KW-0732">Signal</keyword>
<keyword id="KW-0812">Transmembrane</keyword>
<keyword id="KW-1133">Transmembrane helix</keyword>
<keyword id="KW-0862">Zinc</keyword>
<keyword id="KW-0863">Zinc-finger</keyword>
<reference key="1">
    <citation type="journal article" date="1999" name="DNA Res.">
        <title>Prediction of the coding sequences of unidentified human genes. XV. The complete sequences of 100 new cDNA clones from brain which code for large proteins in vitro.</title>
        <authorList>
            <person name="Nagase T."/>
            <person name="Ishikawa K."/>
            <person name="Kikuno R."/>
            <person name="Hirosawa M."/>
            <person name="Nomura N."/>
            <person name="Ohara O."/>
        </authorList>
    </citation>
    <scope>NUCLEOTIDE SEQUENCE [LARGE SCALE MRNA] (ISOFORM 2)</scope>
    <source>
        <tissue>Brain</tissue>
    </source>
</reference>
<reference key="2">
    <citation type="journal article" date="2004" name="Nat. Genet.">
        <title>Complete sequencing and characterization of 21,243 full-length human cDNAs.</title>
        <authorList>
            <person name="Ota T."/>
            <person name="Suzuki Y."/>
            <person name="Nishikawa T."/>
            <person name="Otsuki T."/>
            <person name="Sugiyama T."/>
            <person name="Irie R."/>
            <person name="Wakamatsu A."/>
            <person name="Hayashi K."/>
            <person name="Sato H."/>
            <person name="Nagai K."/>
            <person name="Kimura K."/>
            <person name="Makita H."/>
            <person name="Sekine M."/>
            <person name="Obayashi M."/>
            <person name="Nishi T."/>
            <person name="Shibahara T."/>
            <person name="Tanaka T."/>
            <person name="Ishii S."/>
            <person name="Yamamoto J."/>
            <person name="Saito K."/>
            <person name="Kawai Y."/>
            <person name="Isono Y."/>
            <person name="Nakamura Y."/>
            <person name="Nagahari K."/>
            <person name="Murakami K."/>
            <person name="Yasuda T."/>
            <person name="Iwayanagi T."/>
            <person name="Wagatsuma M."/>
            <person name="Shiratori A."/>
            <person name="Sudo H."/>
            <person name="Hosoiri T."/>
            <person name="Kaku Y."/>
            <person name="Kodaira H."/>
            <person name="Kondo H."/>
            <person name="Sugawara M."/>
            <person name="Takahashi M."/>
            <person name="Kanda K."/>
            <person name="Yokoi T."/>
            <person name="Furuya T."/>
            <person name="Kikkawa E."/>
            <person name="Omura Y."/>
            <person name="Abe K."/>
            <person name="Kamihara K."/>
            <person name="Katsuta N."/>
            <person name="Sato K."/>
            <person name="Tanikawa M."/>
            <person name="Yamazaki M."/>
            <person name="Ninomiya K."/>
            <person name="Ishibashi T."/>
            <person name="Yamashita H."/>
            <person name="Murakawa K."/>
            <person name="Fujimori K."/>
            <person name="Tanai H."/>
            <person name="Kimata M."/>
            <person name="Watanabe M."/>
            <person name="Hiraoka S."/>
            <person name="Chiba Y."/>
            <person name="Ishida S."/>
            <person name="Ono Y."/>
            <person name="Takiguchi S."/>
            <person name="Watanabe S."/>
            <person name="Yosida M."/>
            <person name="Hotuta T."/>
            <person name="Kusano J."/>
            <person name="Kanehori K."/>
            <person name="Takahashi-Fujii A."/>
            <person name="Hara H."/>
            <person name="Tanase T.-O."/>
            <person name="Nomura Y."/>
            <person name="Togiya S."/>
            <person name="Komai F."/>
            <person name="Hara R."/>
            <person name="Takeuchi K."/>
            <person name="Arita M."/>
            <person name="Imose N."/>
            <person name="Musashino K."/>
            <person name="Yuuki H."/>
            <person name="Oshima A."/>
            <person name="Sasaki N."/>
            <person name="Aotsuka S."/>
            <person name="Yoshikawa Y."/>
            <person name="Matsunawa H."/>
            <person name="Ichihara T."/>
            <person name="Shiohata N."/>
            <person name="Sano S."/>
            <person name="Moriya S."/>
            <person name="Momiyama H."/>
            <person name="Satoh N."/>
            <person name="Takami S."/>
            <person name="Terashima Y."/>
            <person name="Suzuki O."/>
            <person name="Nakagawa S."/>
            <person name="Senoh A."/>
            <person name="Mizoguchi H."/>
            <person name="Goto Y."/>
            <person name="Shimizu F."/>
            <person name="Wakebe H."/>
            <person name="Hishigaki H."/>
            <person name="Watanabe T."/>
            <person name="Sugiyama A."/>
            <person name="Takemoto M."/>
            <person name="Kawakami B."/>
            <person name="Yamazaki M."/>
            <person name="Watanabe K."/>
            <person name="Kumagai A."/>
            <person name="Itakura S."/>
            <person name="Fukuzumi Y."/>
            <person name="Fujimori Y."/>
            <person name="Komiyama M."/>
            <person name="Tashiro H."/>
            <person name="Tanigami A."/>
            <person name="Fujiwara T."/>
            <person name="Ono T."/>
            <person name="Yamada K."/>
            <person name="Fujii Y."/>
            <person name="Ozaki K."/>
            <person name="Hirao M."/>
            <person name="Ohmori Y."/>
            <person name="Kawabata A."/>
            <person name="Hikiji T."/>
            <person name="Kobatake N."/>
            <person name="Inagaki H."/>
            <person name="Ikema Y."/>
            <person name="Okamoto S."/>
            <person name="Okitani R."/>
            <person name="Kawakami T."/>
            <person name="Noguchi S."/>
            <person name="Itoh T."/>
            <person name="Shigeta K."/>
            <person name="Senba T."/>
            <person name="Matsumura K."/>
            <person name="Nakajima Y."/>
            <person name="Mizuno T."/>
            <person name="Morinaga M."/>
            <person name="Sasaki M."/>
            <person name="Togashi T."/>
            <person name="Oyama M."/>
            <person name="Hata H."/>
            <person name="Watanabe M."/>
            <person name="Komatsu T."/>
            <person name="Mizushima-Sugano J."/>
            <person name="Satoh T."/>
            <person name="Shirai Y."/>
            <person name="Takahashi Y."/>
            <person name="Nakagawa K."/>
            <person name="Okumura K."/>
            <person name="Nagase T."/>
            <person name="Nomura N."/>
            <person name="Kikuchi H."/>
            <person name="Masuho Y."/>
            <person name="Yamashita R."/>
            <person name="Nakai K."/>
            <person name="Yada T."/>
            <person name="Nakamura Y."/>
            <person name="Ohara O."/>
            <person name="Isogai T."/>
            <person name="Sugano S."/>
        </authorList>
    </citation>
    <scope>NUCLEOTIDE SEQUENCE [LARGE SCALE MRNA] (ISOFORM 4)</scope>
    <source>
        <tissue>Salivary gland</tissue>
    </source>
</reference>
<reference key="3">
    <citation type="journal article" date="2005" name="Nature">
        <title>Generation and annotation of the DNA sequences of human chromosomes 2 and 4.</title>
        <authorList>
            <person name="Hillier L.W."/>
            <person name="Graves T.A."/>
            <person name="Fulton R.S."/>
            <person name="Fulton L.A."/>
            <person name="Pepin K.H."/>
            <person name="Minx P."/>
            <person name="Wagner-McPherson C."/>
            <person name="Layman D."/>
            <person name="Wylie K."/>
            <person name="Sekhon M."/>
            <person name="Becker M.C."/>
            <person name="Fewell G.A."/>
            <person name="Delehaunty K.D."/>
            <person name="Miner T.L."/>
            <person name="Nash W.E."/>
            <person name="Kremitzki C."/>
            <person name="Oddy L."/>
            <person name="Du H."/>
            <person name="Sun H."/>
            <person name="Bradshaw-Cordum H."/>
            <person name="Ali J."/>
            <person name="Carter J."/>
            <person name="Cordes M."/>
            <person name="Harris A."/>
            <person name="Isak A."/>
            <person name="van Brunt A."/>
            <person name="Nguyen C."/>
            <person name="Du F."/>
            <person name="Courtney L."/>
            <person name="Kalicki J."/>
            <person name="Ozersky P."/>
            <person name="Abbott S."/>
            <person name="Armstrong J."/>
            <person name="Belter E.A."/>
            <person name="Caruso L."/>
            <person name="Cedroni M."/>
            <person name="Cotton M."/>
            <person name="Davidson T."/>
            <person name="Desai A."/>
            <person name="Elliott G."/>
            <person name="Erb T."/>
            <person name="Fronick C."/>
            <person name="Gaige T."/>
            <person name="Haakenson W."/>
            <person name="Haglund K."/>
            <person name="Holmes A."/>
            <person name="Harkins R."/>
            <person name="Kim K."/>
            <person name="Kruchowski S.S."/>
            <person name="Strong C.M."/>
            <person name="Grewal N."/>
            <person name="Goyea E."/>
            <person name="Hou S."/>
            <person name="Levy A."/>
            <person name="Martinka S."/>
            <person name="Mead K."/>
            <person name="McLellan M.D."/>
            <person name="Meyer R."/>
            <person name="Randall-Maher J."/>
            <person name="Tomlinson C."/>
            <person name="Dauphin-Kohlberg S."/>
            <person name="Kozlowicz-Reilly A."/>
            <person name="Shah N."/>
            <person name="Swearengen-Shahid S."/>
            <person name="Snider J."/>
            <person name="Strong J.T."/>
            <person name="Thompson J."/>
            <person name="Yoakum M."/>
            <person name="Leonard S."/>
            <person name="Pearman C."/>
            <person name="Trani L."/>
            <person name="Radionenko M."/>
            <person name="Waligorski J.E."/>
            <person name="Wang C."/>
            <person name="Rock S.M."/>
            <person name="Tin-Wollam A.-M."/>
            <person name="Maupin R."/>
            <person name="Latreille P."/>
            <person name="Wendl M.C."/>
            <person name="Yang S.-P."/>
            <person name="Pohl C."/>
            <person name="Wallis J.W."/>
            <person name="Spieth J."/>
            <person name="Bieri T.A."/>
            <person name="Berkowicz N."/>
            <person name="Nelson J.O."/>
            <person name="Osborne J."/>
            <person name="Ding L."/>
            <person name="Meyer R."/>
            <person name="Sabo A."/>
            <person name="Shotland Y."/>
            <person name="Sinha P."/>
            <person name="Wohldmann P.E."/>
            <person name="Cook L.L."/>
            <person name="Hickenbotham M.T."/>
            <person name="Eldred J."/>
            <person name="Williams D."/>
            <person name="Jones T.A."/>
            <person name="She X."/>
            <person name="Ciccarelli F.D."/>
            <person name="Izaurralde E."/>
            <person name="Taylor J."/>
            <person name="Schmutz J."/>
            <person name="Myers R.M."/>
            <person name="Cox D.R."/>
            <person name="Huang X."/>
            <person name="McPherson J.D."/>
            <person name="Mardis E.R."/>
            <person name="Clifton S.W."/>
            <person name="Warren W.C."/>
            <person name="Chinwalla A.T."/>
            <person name="Eddy S.R."/>
            <person name="Marra M.A."/>
            <person name="Ovcharenko I."/>
            <person name="Furey T.S."/>
            <person name="Miller W."/>
            <person name="Eichler E.E."/>
            <person name="Bork P."/>
            <person name="Suyama M."/>
            <person name="Torrents D."/>
            <person name="Waterston R.H."/>
            <person name="Wilson R.K."/>
        </authorList>
    </citation>
    <scope>NUCLEOTIDE SEQUENCE [LARGE SCALE GENOMIC DNA]</scope>
</reference>
<reference key="4">
    <citation type="journal article" date="2004" name="Genome Res.">
        <title>The status, quality, and expansion of the NIH full-length cDNA project: the Mammalian Gene Collection (MGC).</title>
        <authorList>
            <consortium name="The MGC Project Team"/>
        </authorList>
    </citation>
    <scope>NUCLEOTIDE SEQUENCE [LARGE SCALE MRNA] OF 92-438 (ISOFORM 3)</scope>
</reference>
<protein>
    <recommendedName>
        <fullName>RING finger protein 150</fullName>
    </recommendedName>
</protein>
<organism>
    <name type="scientific">Homo sapiens</name>
    <name type="common">Human</name>
    <dbReference type="NCBI Taxonomy" id="9606"/>
    <lineage>
        <taxon>Eukaryota</taxon>
        <taxon>Metazoa</taxon>
        <taxon>Chordata</taxon>
        <taxon>Craniata</taxon>
        <taxon>Vertebrata</taxon>
        <taxon>Euteleostomi</taxon>
        <taxon>Mammalia</taxon>
        <taxon>Eutheria</taxon>
        <taxon>Euarchontoglires</taxon>
        <taxon>Primates</taxon>
        <taxon>Haplorrhini</taxon>
        <taxon>Catarrhini</taxon>
        <taxon>Hominidae</taxon>
        <taxon>Homo</taxon>
    </lineage>
</organism>
<name>RN150_HUMAN</name>
<evidence type="ECO:0000255" key="1"/>
<evidence type="ECO:0000255" key="2">
    <source>
        <dbReference type="PROSITE-ProRule" id="PRU00175"/>
    </source>
</evidence>
<evidence type="ECO:0000303" key="3">
    <source>
    </source>
</evidence>
<evidence type="ECO:0000303" key="4">
    <source>
    </source>
</evidence>
<evidence type="ECO:0000303" key="5">
    <source>
    </source>
</evidence>
<evidence type="ECO:0000305" key="6"/>